<sequence>MANHKSSLKRIRQEEKRRLHNRYYAKTMRNTVKKLRATTDKAEAVAMYPGVQKMLDKLAKTNIIHKNKAANLKSKLAAYISKLA</sequence>
<dbReference type="EMBL" id="CP000139">
    <property type="protein sequence ID" value="ABR39078.1"/>
    <property type="molecule type" value="Genomic_DNA"/>
</dbReference>
<dbReference type="RefSeq" id="WP_005838940.1">
    <property type="nucleotide sequence ID" value="NZ_JANSWM010000073.1"/>
</dbReference>
<dbReference type="SMR" id="A6L064"/>
<dbReference type="STRING" id="435590.BVU_1389"/>
<dbReference type="PaxDb" id="435590-BVU_1389"/>
<dbReference type="GeneID" id="93445272"/>
<dbReference type="KEGG" id="bvu:BVU_1389"/>
<dbReference type="eggNOG" id="COG0268">
    <property type="taxonomic scope" value="Bacteria"/>
</dbReference>
<dbReference type="HOGENOM" id="CLU_160655_3_2_10"/>
<dbReference type="BioCyc" id="BVUL435590:G1G59-1452-MONOMER"/>
<dbReference type="Proteomes" id="UP000002861">
    <property type="component" value="Chromosome"/>
</dbReference>
<dbReference type="GO" id="GO:0005829">
    <property type="term" value="C:cytosol"/>
    <property type="evidence" value="ECO:0007669"/>
    <property type="project" value="TreeGrafter"/>
</dbReference>
<dbReference type="GO" id="GO:0015935">
    <property type="term" value="C:small ribosomal subunit"/>
    <property type="evidence" value="ECO:0007669"/>
    <property type="project" value="TreeGrafter"/>
</dbReference>
<dbReference type="GO" id="GO:0070181">
    <property type="term" value="F:small ribosomal subunit rRNA binding"/>
    <property type="evidence" value="ECO:0007669"/>
    <property type="project" value="TreeGrafter"/>
</dbReference>
<dbReference type="GO" id="GO:0003735">
    <property type="term" value="F:structural constituent of ribosome"/>
    <property type="evidence" value="ECO:0007669"/>
    <property type="project" value="InterPro"/>
</dbReference>
<dbReference type="GO" id="GO:0006412">
    <property type="term" value="P:translation"/>
    <property type="evidence" value="ECO:0007669"/>
    <property type="project" value="UniProtKB-UniRule"/>
</dbReference>
<dbReference type="Gene3D" id="1.20.58.110">
    <property type="entry name" value="Ribosomal protein S20"/>
    <property type="match status" value="1"/>
</dbReference>
<dbReference type="HAMAP" id="MF_00500">
    <property type="entry name" value="Ribosomal_bS20"/>
    <property type="match status" value="1"/>
</dbReference>
<dbReference type="InterPro" id="IPR002583">
    <property type="entry name" value="Ribosomal_bS20"/>
</dbReference>
<dbReference type="InterPro" id="IPR036510">
    <property type="entry name" value="Ribosomal_bS20_sf"/>
</dbReference>
<dbReference type="NCBIfam" id="TIGR00029">
    <property type="entry name" value="S20"/>
    <property type="match status" value="1"/>
</dbReference>
<dbReference type="PANTHER" id="PTHR33398">
    <property type="entry name" value="30S RIBOSOMAL PROTEIN S20"/>
    <property type="match status" value="1"/>
</dbReference>
<dbReference type="PANTHER" id="PTHR33398:SF1">
    <property type="entry name" value="SMALL RIBOSOMAL SUBUNIT PROTEIN BS20C"/>
    <property type="match status" value="1"/>
</dbReference>
<dbReference type="Pfam" id="PF01649">
    <property type="entry name" value="Ribosomal_S20p"/>
    <property type="match status" value="1"/>
</dbReference>
<dbReference type="SUPFAM" id="SSF46992">
    <property type="entry name" value="Ribosomal protein S20"/>
    <property type="match status" value="1"/>
</dbReference>
<feature type="chain" id="PRO_1000014549" description="Small ribosomal subunit protein bS20">
    <location>
        <begin position="1"/>
        <end position="84"/>
    </location>
</feature>
<keyword id="KW-0687">Ribonucleoprotein</keyword>
<keyword id="KW-0689">Ribosomal protein</keyword>
<keyword id="KW-0694">RNA-binding</keyword>
<keyword id="KW-0699">rRNA-binding</keyword>
<proteinExistence type="inferred from homology"/>
<organism>
    <name type="scientific">Phocaeicola vulgatus (strain ATCC 8482 / DSM 1447 / JCM 5826 / CCUG 4940 / NBRC 14291 / NCTC 11154)</name>
    <name type="common">Bacteroides vulgatus</name>
    <dbReference type="NCBI Taxonomy" id="435590"/>
    <lineage>
        <taxon>Bacteria</taxon>
        <taxon>Pseudomonadati</taxon>
        <taxon>Bacteroidota</taxon>
        <taxon>Bacteroidia</taxon>
        <taxon>Bacteroidales</taxon>
        <taxon>Bacteroidaceae</taxon>
        <taxon>Phocaeicola</taxon>
    </lineage>
</organism>
<gene>
    <name evidence="1" type="primary">rpsT</name>
    <name type="ordered locus">BVU_1389</name>
</gene>
<name>RS20_PHOV8</name>
<accession>A6L064</accession>
<reference key="1">
    <citation type="journal article" date="2007" name="PLoS Biol.">
        <title>Evolution of symbiotic bacteria in the distal human intestine.</title>
        <authorList>
            <person name="Xu J."/>
            <person name="Mahowald M.A."/>
            <person name="Ley R.E."/>
            <person name="Lozupone C.A."/>
            <person name="Hamady M."/>
            <person name="Martens E.C."/>
            <person name="Henrissat B."/>
            <person name="Coutinho P.M."/>
            <person name="Minx P."/>
            <person name="Latreille P."/>
            <person name="Cordum H."/>
            <person name="Van Brunt A."/>
            <person name="Kim K."/>
            <person name="Fulton R.S."/>
            <person name="Fulton L.A."/>
            <person name="Clifton S.W."/>
            <person name="Wilson R.K."/>
            <person name="Knight R.D."/>
            <person name="Gordon J.I."/>
        </authorList>
    </citation>
    <scope>NUCLEOTIDE SEQUENCE [LARGE SCALE GENOMIC DNA]</scope>
    <source>
        <strain>ATCC 8482 / DSM 1447 / JCM 5826 / CCUG 4940 / NBRC 14291 / NCTC 11154</strain>
    </source>
</reference>
<protein>
    <recommendedName>
        <fullName evidence="1">Small ribosomal subunit protein bS20</fullName>
    </recommendedName>
    <alternativeName>
        <fullName evidence="2">30S ribosomal protein S20</fullName>
    </alternativeName>
</protein>
<comment type="function">
    <text evidence="1">Binds directly to 16S ribosomal RNA.</text>
</comment>
<comment type="similarity">
    <text evidence="1">Belongs to the bacterial ribosomal protein bS20 family.</text>
</comment>
<evidence type="ECO:0000255" key="1">
    <source>
        <dbReference type="HAMAP-Rule" id="MF_00500"/>
    </source>
</evidence>
<evidence type="ECO:0000305" key="2"/>